<reference key="1">
    <citation type="submission" date="2006-12" db="EMBL/GenBank/DDBJ databases">
        <title>Complete sequence of chromosome 1 of Verminephrobacter eiseniae EF01-2.</title>
        <authorList>
            <person name="Copeland A."/>
            <person name="Lucas S."/>
            <person name="Lapidus A."/>
            <person name="Barry K."/>
            <person name="Detter J.C."/>
            <person name="Glavina del Rio T."/>
            <person name="Dalin E."/>
            <person name="Tice H."/>
            <person name="Pitluck S."/>
            <person name="Chertkov O."/>
            <person name="Brettin T."/>
            <person name="Bruce D."/>
            <person name="Han C."/>
            <person name="Tapia R."/>
            <person name="Gilna P."/>
            <person name="Schmutz J."/>
            <person name="Larimer F."/>
            <person name="Land M."/>
            <person name="Hauser L."/>
            <person name="Kyrpides N."/>
            <person name="Kim E."/>
            <person name="Stahl D."/>
            <person name="Richardson P."/>
        </authorList>
    </citation>
    <scope>NUCLEOTIDE SEQUENCE [LARGE SCALE GENOMIC DNA]</scope>
    <source>
        <strain>EF01-2</strain>
    </source>
</reference>
<gene>
    <name evidence="1" type="primary">hprK</name>
    <name type="ordered locus">Veis_0602</name>
</gene>
<feature type="chain" id="PRO_1000067181" description="HPr kinase/phosphorylase">
    <location>
        <begin position="1"/>
        <end position="318"/>
    </location>
</feature>
<feature type="region of interest" description="Important for the catalytic mechanism of both phosphorylation and dephosphorylation" evidence="1">
    <location>
        <begin position="209"/>
        <end position="218"/>
    </location>
</feature>
<feature type="region of interest" description="Important for the catalytic mechanism of dephosphorylation" evidence="1">
    <location>
        <begin position="273"/>
        <end position="278"/>
    </location>
</feature>
<feature type="active site" evidence="1">
    <location>
        <position position="146"/>
    </location>
</feature>
<feature type="active site" evidence="1">
    <location>
        <position position="167"/>
    </location>
</feature>
<feature type="active site" description="Proton acceptor; for phosphorylation activity. Proton donor; for dephosphorylation activity" evidence="1">
    <location>
        <position position="185"/>
    </location>
</feature>
<feature type="active site" evidence="1">
    <location>
        <position position="252"/>
    </location>
</feature>
<feature type="binding site" evidence="1">
    <location>
        <begin position="161"/>
        <end position="168"/>
    </location>
    <ligand>
        <name>ATP</name>
        <dbReference type="ChEBI" id="CHEBI:30616"/>
    </ligand>
</feature>
<feature type="binding site" evidence="1">
    <location>
        <position position="168"/>
    </location>
    <ligand>
        <name>Mg(2+)</name>
        <dbReference type="ChEBI" id="CHEBI:18420"/>
    </ligand>
</feature>
<feature type="binding site" evidence="1">
    <location>
        <position position="210"/>
    </location>
    <ligand>
        <name>Mg(2+)</name>
        <dbReference type="ChEBI" id="CHEBI:18420"/>
    </ligand>
</feature>
<accession>A1WFH8</accession>
<dbReference type="EC" id="2.7.11.-" evidence="1"/>
<dbReference type="EC" id="2.7.4.-" evidence="1"/>
<dbReference type="EMBL" id="CP000542">
    <property type="protein sequence ID" value="ABM56385.1"/>
    <property type="molecule type" value="Genomic_DNA"/>
</dbReference>
<dbReference type="RefSeq" id="WP_011808399.1">
    <property type="nucleotide sequence ID" value="NC_008786.1"/>
</dbReference>
<dbReference type="SMR" id="A1WFH8"/>
<dbReference type="STRING" id="391735.Veis_0602"/>
<dbReference type="GeneID" id="76459304"/>
<dbReference type="KEGG" id="vei:Veis_0602"/>
<dbReference type="eggNOG" id="COG1493">
    <property type="taxonomic scope" value="Bacteria"/>
</dbReference>
<dbReference type="HOGENOM" id="CLU_052030_0_2_4"/>
<dbReference type="OrthoDB" id="9778803at2"/>
<dbReference type="Proteomes" id="UP000000374">
    <property type="component" value="Chromosome"/>
</dbReference>
<dbReference type="GO" id="GO:0005524">
    <property type="term" value="F:ATP binding"/>
    <property type="evidence" value="ECO:0007669"/>
    <property type="project" value="UniProtKB-UniRule"/>
</dbReference>
<dbReference type="GO" id="GO:0000287">
    <property type="term" value="F:magnesium ion binding"/>
    <property type="evidence" value="ECO:0007669"/>
    <property type="project" value="UniProtKB-UniRule"/>
</dbReference>
<dbReference type="GO" id="GO:0000155">
    <property type="term" value="F:phosphorelay sensor kinase activity"/>
    <property type="evidence" value="ECO:0007669"/>
    <property type="project" value="InterPro"/>
</dbReference>
<dbReference type="GO" id="GO:0004674">
    <property type="term" value="F:protein serine/threonine kinase activity"/>
    <property type="evidence" value="ECO:0007669"/>
    <property type="project" value="UniProtKB-KW"/>
</dbReference>
<dbReference type="GO" id="GO:0004712">
    <property type="term" value="F:protein serine/threonine/tyrosine kinase activity"/>
    <property type="evidence" value="ECO:0007669"/>
    <property type="project" value="UniProtKB-UniRule"/>
</dbReference>
<dbReference type="GO" id="GO:0006109">
    <property type="term" value="P:regulation of carbohydrate metabolic process"/>
    <property type="evidence" value="ECO:0007669"/>
    <property type="project" value="UniProtKB-UniRule"/>
</dbReference>
<dbReference type="CDD" id="cd01918">
    <property type="entry name" value="HprK_C"/>
    <property type="match status" value="1"/>
</dbReference>
<dbReference type="FunFam" id="3.40.50.300:FF:000174">
    <property type="entry name" value="HPr kinase/phosphorylase"/>
    <property type="match status" value="1"/>
</dbReference>
<dbReference type="Gene3D" id="3.40.1390.20">
    <property type="entry name" value="HprK N-terminal domain-like"/>
    <property type="match status" value="1"/>
</dbReference>
<dbReference type="Gene3D" id="3.40.50.300">
    <property type="entry name" value="P-loop containing nucleotide triphosphate hydrolases"/>
    <property type="match status" value="1"/>
</dbReference>
<dbReference type="HAMAP" id="MF_01249">
    <property type="entry name" value="HPr_kinase"/>
    <property type="match status" value="1"/>
</dbReference>
<dbReference type="InterPro" id="IPR003755">
    <property type="entry name" value="HPr(Ser)_kin/Pase"/>
</dbReference>
<dbReference type="InterPro" id="IPR011104">
    <property type="entry name" value="Hpr_kin/Pase_C"/>
</dbReference>
<dbReference type="InterPro" id="IPR011126">
    <property type="entry name" value="Hpr_kin/Pase_Hpr_N"/>
</dbReference>
<dbReference type="InterPro" id="IPR027417">
    <property type="entry name" value="P-loop_NTPase"/>
</dbReference>
<dbReference type="InterPro" id="IPR028979">
    <property type="entry name" value="Ser_kin/Pase_Hpr-like_N_sf"/>
</dbReference>
<dbReference type="NCBIfam" id="TIGR00679">
    <property type="entry name" value="hpr-ser"/>
    <property type="match status" value="1"/>
</dbReference>
<dbReference type="PANTHER" id="PTHR30305:SF1">
    <property type="entry name" value="HPR KINASE_PHOSPHORYLASE"/>
    <property type="match status" value="1"/>
</dbReference>
<dbReference type="PANTHER" id="PTHR30305">
    <property type="entry name" value="PROTEIN YJDM-RELATED"/>
    <property type="match status" value="1"/>
</dbReference>
<dbReference type="Pfam" id="PF07475">
    <property type="entry name" value="Hpr_kinase_C"/>
    <property type="match status" value="1"/>
</dbReference>
<dbReference type="Pfam" id="PF02603">
    <property type="entry name" value="Hpr_kinase_N"/>
    <property type="match status" value="1"/>
</dbReference>
<dbReference type="SUPFAM" id="SSF75138">
    <property type="entry name" value="HprK N-terminal domain-like"/>
    <property type="match status" value="1"/>
</dbReference>
<dbReference type="SUPFAM" id="SSF53795">
    <property type="entry name" value="PEP carboxykinase-like"/>
    <property type="match status" value="1"/>
</dbReference>
<protein>
    <recommendedName>
        <fullName evidence="1">HPr kinase/phosphorylase</fullName>
        <shortName evidence="1">HPrK/P</shortName>
        <ecNumber evidence="1">2.7.11.-</ecNumber>
        <ecNumber evidence="1">2.7.4.-</ecNumber>
    </recommendedName>
    <alternativeName>
        <fullName evidence="1">HPr(Ser) kinase/phosphorylase</fullName>
    </alternativeName>
</protein>
<keyword id="KW-0067">ATP-binding</keyword>
<keyword id="KW-0418">Kinase</keyword>
<keyword id="KW-0460">Magnesium</keyword>
<keyword id="KW-0479">Metal-binding</keyword>
<keyword id="KW-0511">Multifunctional enzyme</keyword>
<keyword id="KW-0547">Nucleotide-binding</keyword>
<keyword id="KW-1185">Reference proteome</keyword>
<keyword id="KW-0723">Serine/threonine-protein kinase</keyword>
<keyword id="KW-0808">Transferase</keyword>
<name>HPRK_VEREI</name>
<evidence type="ECO:0000255" key="1">
    <source>
        <dbReference type="HAMAP-Rule" id="MF_01249"/>
    </source>
</evidence>
<comment type="function">
    <text evidence="1">Catalyzes the ATP- as well as the pyrophosphate-dependent phosphorylation of a specific serine residue in HPr, a phosphocarrier protein of the phosphoenolpyruvate-dependent sugar phosphotransferase system (PTS). HprK/P also catalyzes the pyrophosphate-producing, inorganic phosphate-dependent dephosphorylation (phosphorolysis) of seryl-phosphorylated HPr (P-Ser-HPr).</text>
</comment>
<comment type="catalytic activity">
    <reaction evidence="1">
        <text>[HPr protein]-L-serine + ATP = [HPr protein]-O-phospho-L-serine + ADP + H(+)</text>
        <dbReference type="Rhea" id="RHEA:46600"/>
        <dbReference type="Rhea" id="RHEA-COMP:11602"/>
        <dbReference type="Rhea" id="RHEA-COMP:11603"/>
        <dbReference type="ChEBI" id="CHEBI:15378"/>
        <dbReference type="ChEBI" id="CHEBI:29999"/>
        <dbReference type="ChEBI" id="CHEBI:30616"/>
        <dbReference type="ChEBI" id="CHEBI:83421"/>
        <dbReference type="ChEBI" id="CHEBI:456216"/>
    </reaction>
</comment>
<comment type="catalytic activity">
    <reaction evidence="1">
        <text>[HPr protein]-O-phospho-L-serine + phosphate + H(+) = [HPr protein]-L-serine + diphosphate</text>
        <dbReference type="Rhea" id="RHEA:46604"/>
        <dbReference type="Rhea" id="RHEA-COMP:11602"/>
        <dbReference type="Rhea" id="RHEA-COMP:11603"/>
        <dbReference type="ChEBI" id="CHEBI:15378"/>
        <dbReference type="ChEBI" id="CHEBI:29999"/>
        <dbReference type="ChEBI" id="CHEBI:33019"/>
        <dbReference type="ChEBI" id="CHEBI:43474"/>
        <dbReference type="ChEBI" id="CHEBI:83421"/>
    </reaction>
</comment>
<comment type="cofactor">
    <cofactor evidence="1">
        <name>Mg(2+)</name>
        <dbReference type="ChEBI" id="CHEBI:18420"/>
    </cofactor>
</comment>
<comment type="subunit">
    <text evidence="1">Homohexamer.</text>
</comment>
<comment type="domain">
    <text evidence="1">The Walker A ATP-binding motif also binds Pi and PPi.</text>
</comment>
<comment type="miscellaneous">
    <text evidence="1">Both phosphorylation and phosphorolysis are carried out by the same active site and suggest a common mechanism for both reactions.</text>
</comment>
<comment type="similarity">
    <text evidence="1">Belongs to the HPrK/P family.</text>
</comment>
<organism>
    <name type="scientific">Verminephrobacter eiseniae (strain EF01-2)</name>
    <dbReference type="NCBI Taxonomy" id="391735"/>
    <lineage>
        <taxon>Bacteria</taxon>
        <taxon>Pseudomonadati</taxon>
        <taxon>Pseudomonadota</taxon>
        <taxon>Betaproteobacteria</taxon>
        <taxon>Burkholderiales</taxon>
        <taxon>Comamonadaceae</taxon>
        <taxon>Verminephrobacter</taxon>
    </lineage>
</organism>
<sequence>MKPNVVSADALFEEFRGPLKWEWVAGLGASERRFDEVVVRLASSGADLVGYLNYIHPYRVQILGEREIAYLGSASPDDCKRRIARIVTLEPPVLVLADNQTAPDALVSMCERAQIPMFSTQESAAFVIDVLRAYLSKHFADRTTMHGVFMDILGLGVMITGESGLGKSELGLELISRGNGLVADDSVDLFRINQTTIEGKCPELLQNLLEVRGIGLLDIRAIFGETAVRRKMRLKLIVHLVRKETLERDYERLPYEPLTQDVLGVPVLKVVIQVVAGRNIAVLVEAAVRNTILQLRGIDTYQEFVERHRRAMEHDNGR</sequence>
<proteinExistence type="inferred from homology"/>